<sequence>MELPVRLVVGLGNPGEKYASTRHNVGFDWLDRLASSQRVAFTLETRFRGLCARIMLADTDIWLLKPQTYMNASGMSVAAVCRYYKIVPEQMLVVHDELDLQPGVIKLKSGGGTGGHNGLKSIVADLSSQVFWRLRIGVGHPGDRNQVVDYVLHPPRREEAALIDEAIDHSMQVWPLIARGDFAAAMQRLHTRQEN</sequence>
<evidence type="ECO:0000255" key="1">
    <source>
        <dbReference type="HAMAP-Rule" id="MF_00083"/>
    </source>
</evidence>
<dbReference type="EC" id="3.1.1.29" evidence="1"/>
<dbReference type="EMBL" id="AL954747">
    <property type="protein sequence ID" value="CAD85735.1"/>
    <property type="molecule type" value="Genomic_DNA"/>
</dbReference>
<dbReference type="RefSeq" id="WP_011112366.1">
    <property type="nucleotide sequence ID" value="NC_004757.1"/>
</dbReference>
<dbReference type="SMR" id="Q82TQ6"/>
<dbReference type="STRING" id="228410.NE1824"/>
<dbReference type="GeneID" id="87104982"/>
<dbReference type="KEGG" id="neu:NE1824"/>
<dbReference type="eggNOG" id="COG0193">
    <property type="taxonomic scope" value="Bacteria"/>
</dbReference>
<dbReference type="HOGENOM" id="CLU_062456_3_1_4"/>
<dbReference type="OrthoDB" id="9800507at2"/>
<dbReference type="PhylomeDB" id="Q82TQ6"/>
<dbReference type="Proteomes" id="UP000001416">
    <property type="component" value="Chromosome"/>
</dbReference>
<dbReference type="GO" id="GO:0005737">
    <property type="term" value="C:cytoplasm"/>
    <property type="evidence" value="ECO:0007669"/>
    <property type="project" value="UniProtKB-SubCell"/>
</dbReference>
<dbReference type="GO" id="GO:0004045">
    <property type="term" value="F:peptidyl-tRNA hydrolase activity"/>
    <property type="evidence" value="ECO:0007669"/>
    <property type="project" value="UniProtKB-UniRule"/>
</dbReference>
<dbReference type="GO" id="GO:0000049">
    <property type="term" value="F:tRNA binding"/>
    <property type="evidence" value="ECO:0007669"/>
    <property type="project" value="UniProtKB-UniRule"/>
</dbReference>
<dbReference type="GO" id="GO:0006515">
    <property type="term" value="P:protein quality control for misfolded or incompletely synthesized proteins"/>
    <property type="evidence" value="ECO:0007669"/>
    <property type="project" value="UniProtKB-UniRule"/>
</dbReference>
<dbReference type="GO" id="GO:0072344">
    <property type="term" value="P:rescue of stalled ribosome"/>
    <property type="evidence" value="ECO:0007669"/>
    <property type="project" value="UniProtKB-UniRule"/>
</dbReference>
<dbReference type="CDD" id="cd00462">
    <property type="entry name" value="PTH"/>
    <property type="match status" value="1"/>
</dbReference>
<dbReference type="FunFam" id="3.40.50.1470:FF:000001">
    <property type="entry name" value="Peptidyl-tRNA hydrolase"/>
    <property type="match status" value="1"/>
</dbReference>
<dbReference type="Gene3D" id="3.40.50.1470">
    <property type="entry name" value="Peptidyl-tRNA hydrolase"/>
    <property type="match status" value="1"/>
</dbReference>
<dbReference type="HAMAP" id="MF_00083">
    <property type="entry name" value="Pept_tRNA_hydro_bact"/>
    <property type="match status" value="1"/>
</dbReference>
<dbReference type="InterPro" id="IPR001328">
    <property type="entry name" value="Pept_tRNA_hydro"/>
</dbReference>
<dbReference type="InterPro" id="IPR018171">
    <property type="entry name" value="Pept_tRNA_hydro_CS"/>
</dbReference>
<dbReference type="InterPro" id="IPR036416">
    <property type="entry name" value="Pept_tRNA_hydro_sf"/>
</dbReference>
<dbReference type="NCBIfam" id="TIGR00447">
    <property type="entry name" value="pth"/>
    <property type="match status" value="1"/>
</dbReference>
<dbReference type="PANTHER" id="PTHR17224">
    <property type="entry name" value="PEPTIDYL-TRNA HYDROLASE"/>
    <property type="match status" value="1"/>
</dbReference>
<dbReference type="PANTHER" id="PTHR17224:SF1">
    <property type="entry name" value="PEPTIDYL-TRNA HYDROLASE"/>
    <property type="match status" value="1"/>
</dbReference>
<dbReference type="Pfam" id="PF01195">
    <property type="entry name" value="Pept_tRNA_hydro"/>
    <property type="match status" value="1"/>
</dbReference>
<dbReference type="SUPFAM" id="SSF53178">
    <property type="entry name" value="Peptidyl-tRNA hydrolase-like"/>
    <property type="match status" value="1"/>
</dbReference>
<dbReference type="PROSITE" id="PS01196">
    <property type="entry name" value="PEPT_TRNA_HYDROL_2"/>
    <property type="match status" value="1"/>
</dbReference>
<accession>Q82TQ6</accession>
<protein>
    <recommendedName>
        <fullName evidence="1">Peptidyl-tRNA hydrolase</fullName>
        <shortName evidence="1">Pth</shortName>
        <ecNumber evidence="1">3.1.1.29</ecNumber>
    </recommendedName>
</protein>
<comment type="function">
    <text evidence="1">Hydrolyzes ribosome-free peptidyl-tRNAs (with 1 or more amino acids incorporated), which drop off the ribosome during protein synthesis, or as a result of ribosome stalling.</text>
</comment>
<comment type="function">
    <text evidence="1">Catalyzes the release of premature peptidyl moieties from peptidyl-tRNA molecules trapped in stalled 50S ribosomal subunits, and thus maintains levels of free tRNAs and 50S ribosomes.</text>
</comment>
<comment type="catalytic activity">
    <reaction evidence="1">
        <text>an N-acyl-L-alpha-aminoacyl-tRNA + H2O = an N-acyl-L-amino acid + a tRNA + H(+)</text>
        <dbReference type="Rhea" id="RHEA:54448"/>
        <dbReference type="Rhea" id="RHEA-COMP:10123"/>
        <dbReference type="Rhea" id="RHEA-COMP:13883"/>
        <dbReference type="ChEBI" id="CHEBI:15377"/>
        <dbReference type="ChEBI" id="CHEBI:15378"/>
        <dbReference type="ChEBI" id="CHEBI:59874"/>
        <dbReference type="ChEBI" id="CHEBI:78442"/>
        <dbReference type="ChEBI" id="CHEBI:138191"/>
        <dbReference type="EC" id="3.1.1.29"/>
    </reaction>
</comment>
<comment type="subunit">
    <text evidence="1">Monomer.</text>
</comment>
<comment type="subcellular location">
    <subcellularLocation>
        <location evidence="1">Cytoplasm</location>
    </subcellularLocation>
</comment>
<comment type="similarity">
    <text evidence="1">Belongs to the PTH family.</text>
</comment>
<reference key="1">
    <citation type="journal article" date="2003" name="J. Bacteriol.">
        <title>Complete genome sequence of the ammonia-oxidizing bacterium and obligate chemolithoautotroph Nitrosomonas europaea.</title>
        <authorList>
            <person name="Chain P."/>
            <person name="Lamerdin J.E."/>
            <person name="Larimer F.W."/>
            <person name="Regala W."/>
            <person name="Lao V."/>
            <person name="Land M.L."/>
            <person name="Hauser L."/>
            <person name="Hooper A.B."/>
            <person name="Klotz M.G."/>
            <person name="Norton J."/>
            <person name="Sayavedra-Soto L.A."/>
            <person name="Arciero D.M."/>
            <person name="Hommes N.G."/>
            <person name="Whittaker M.M."/>
            <person name="Arp D.J."/>
        </authorList>
    </citation>
    <scope>NUCLEOTIDE SEQUENCE [LARGE SCALE GENOMIC DNA]</scope>
    <source>
        <strain>ATCC 19718 / CIP 103999 / KCTC 2705 / NBRC 14298</strain>
    </source>
</reference>
<keyword id="KW-0963">Cytoplasm</keyword>
<keyword id="KW-0378">Hydrolase</keyword>
<keyword id="KW-1185">Reference proteome</keyword>
<keyword id="KW-0694">RNA-binding</keyword>
<keyword id="KW-0820">tRNA-binding</keyword>
<feature type="chain" id="PRO_0000187784" description="Peptidyl-tRNA hydrolase">
    <location>
        <begin position="1"/>
        <end position="195"/>
    </location>
</feature>
<feature type="active site" description="Proton acceptor" evidence="1">
    <location>
        <position position="23"/>
    </location>
</feature>
<feature type="binding site" evidence="1">
    <location>
        <position position="18"/>
    </location>
    <ligand>
        <name>tRNA</name>
        <dbReference type="ChEBI" id="CHEBI:17843"/>
    </ligand>
</feature>
<feature type="binding site" evidence="1">
    <location>
        <position position="69"/>
    </location>
    <ligand>
        <name>tRNA</name>
        <dbReference type="ChEBI" id="CHEBI:17843"/>
    </ligand>
</feature>
<feature type="binding site" evidence="1">
    <location>
        <position position="71"/>
    </location>
    <ligand>
        <name>tRNA</name>
        <dbReference type="ChEBI" id="CHEBI:17843"/>
    </ligand>
</feature>
<feature type="binding site" evidence="1">
    <location>
        <position position="117"/>
    </location>
    <ligand>
        <name>tRNA</name>
        <dbReference type="ChEBI" id="CHEBI:17843"/>
    </ligand>
</feature>
<feature type="site" description="Discriminates between blocked and unblocked aminoacyl-tRNA" evidence="1">
    <location>
        <position position="13"/>
    </location>
</feature>
<feature type="site" description="Stabilizes the basic form of H active site to accept a proton" evidence="1">
    <location>
        <position position="96"/>
    </location>
</feature>
<organism>
    <name type="scientific">Nitrosomonas europaea (strain ATCC 19718 / CIP 103999 / KCTC 2705 / NBRC 14298)</name>
    <dbReference type="NCBI Taxonomy" id="228410"/>
    <lineage>
        <taxon>Bacteria</taxon>
        <taxon>Pseudomonadati</taxon>
        <taxon>Pseudomonadota</taxon>
        <taxon>Betaproteobacteria</taxon>
        <taxon>Nitrosomonadales</taxon>
        <taxon>Nitrosomonadaceae</taxon>
        <taxon>Nitrosomonas</taxon>
    </lineage>
</organism>
<gene>
    <name evidence="1" type="primary">pth</name>
    <name type="ordered locus">NE1824</name>
</gene>
<proteinExistence type="inferred from homology"/>
<name>PTH_NITEU</name>